<organism>
    <name type="scientific">Methanosarcina barkeri (strain Fusaro / DSM 804)</name>
    <dbReference type="NCBI Taxonomy" id="269797"/>
    <lineage>
        <taxon>Archaea</taxon>
        <taxon>Methanobacteriati</taxon>
        <taxon>Methanobacteriota</taxon>
        <taxon>Stenosarchaea group</taxon>
        <taxon>Methanomicrobia</taxon>
        <taxon>Methanosarcinales</taxon>
        <taxon>Methanosarcinaceae</taxon>
        <taxon>Methanosarcina</taxon>
    </lineage>
</organism>
<name>MTRG_METBF</name>
<evidence type="ECO:0000255" key="1">
    <source>
        <dbReference type="HAMAP-Rule" id="MF_01500"/>
    </source>
</evidence>
<comment type="function">
    <text evidence="1">Part of a complex that catalyzes the formation of methyl-coenzyme M and tetrahydromethanopterin from coenzyme M and methyl-tetrahydromethanopterin. This is an energy-conserving, sodium-ion translocating step.</text>
</comment>
<comment type="catalytic activity">
    <reaction evidence="1">
        <text>5-methyl-5,6,7,8-tetrahydromethanopterin + coenzyme M + 2 Na(+)(in) = 5,6,7,8-tetrahydromethanopterin + methyl-coenzyme M + 2 Na(+)(out)</text>
        <dbReference type="Rhea" id="RHEA:53492"/>
        <dbReference type="ChEBI" id="CHEBI:29101"/>
        <dbReference type="ChEBI" id="CHEBI:58103"/>
        <dbReference type="ChEBI" id="CHEBI:58116"/>
        <dbReference type="ChEBI" id="CHEBI:58286"/>
        <dbReference type="ChEBI" id="CHEBI:58319"/>
        <dbReference type="EC" id="7.2.1.4"/>
    </reaction>
</comment>
<comment type="pathway">
    <text evidence="1">One-carbon metabolism; methanogenesis from CO(2); methyl-coenzyme M from 5,10-methylene-5,6,7,8-tetrahydromethanopterin: step 2/2.</text>
</comment>
<comment type="subunit">
    <text evidence="1">The complex is composed of 8 subunits; MtrA, MtrB, MtrC, MtrD, MtrE, MtrF, MtrG and MtrH.</text>
</comment>
<comment type="subcellular location">
    <subcellularLocation>
        <location evidence="1">Cell membrane</location>
        <topology evidence="1">Single-pass membrane protein</topology>
    </subcellularLocation>
</comment>
<comment type="similarity">
    <text evidence="1">Belongs to the MtrG family.</text>
</comment>
<reference key="1">
    <citation type="journal article" date="1999" name="FEBS Lett.">
        <title>The energy conserving methyltetrahydromethanopterin:coenzyme M methyltransferase complex from methanogenic archaea: function of the subunit MtrH.</title>
        <authorList>
            <person name="Hippler B."/>
            <person name="Thauer R.K."/>
        </authorList>
    </citation>
    <scope>NUCLEOTIDE SEQUENCE [GENOMIC DNA]</scope>
</reference>
<reference key="2">
    <citation type="journal article" date="2006" name="J. Bacteriol.">
        <title>The Methanosarcina barkeri genome: comparative analysis with Methanosarcina acetivorans and Methanosarcina mazei reveals extensive rearrangement within methanosarcinal genomes.</title>
        <authorList>
            <person name="Maeder D.L."/>
            <person name="Anderson I."/>
            <person name="Brettin T.S."/>
            <person name="Bruce D.C."/>
            <person name="Gilna P."/>
            <person name="Han C.S."/>
            <person name="Lapidus A."/>
            <person name="Metcalf W.W."/>
            <person name="Saunders E."/>
            <person name="Tapia R."/>
            <person name="Sowers K.R."/>
        </authorList>
    </citation>
    <scope>NUCLEOTIDE SEQUENCE [LARGE SCALE GENOMIC DNA]</scope>
    <source>
        <strain>Fusaro / DSM 804</strain>
    </source>
</reference>
<dbReference type="EC" id="7.2.1.4" evidence="1"/>
<dbReference type="EMBL" id="AJ132817">
    <property type="protein sequence ID" value="CAB41644.1"/>
    <property type="molecule type" value="Genomic_DNA"/>
</dbReference>
<dbReference type="EMBL" id="CP000099">
    <property type="protein sequence ID" value="AAZ70219.1"/>
    <property type="molecule type" value="Genomic_DNA"/>
</dbReference>
<dbReference type="SMR" id="Q9Y8K6"/>
<dbReference type="STRING" id="269797.Mbar_A1256"/>
<dbReference type="PaxDb" id="269797-Mbar_A1256"/>
<dbReference type="KEGG" id="mba:Mbar_A1256"/>
<dbReference type="eggNOG" id="arCOG03380">
    <property type="taxonomic scope" value="Archaea"/>
</dbReference>
<dbReference type="HOGENOM" id="CLU_191926_0_0_2"/>
<dbReference type="OrthoDB" id="147532at2157"/>
<dbReference type="UniPathway" id="UPA00640">
    <property type="reaction ID" value="UER00698"/>
</dbReference>
<dbReference type="GO" id="GO:0005886">
    <property type="term" value="C:plasma membrane"/>
    <property type="evidence" value="ECO:0007669"/>
    <property type="project" value="UniProtKB-SubCell"/>
</dbReference>
<dbReference type="GO" id="GO:0030269">
    <property type="term" value="F:tetrahydromethanopterin S-methyltransferase activity"/>
    <property type="evidence" value="ECO:0007669"/>
    <property type="project" value="UniProtKB-UniRule"/>
</dbReference>
<dbReference type="GO" id="GO:0019386">
    <property type="term" value="P:methanogenesis, from carbon dioxide"/>
    <property type="evidence" value="ECO:0007669"/>
    <property type="project" value="UniProtKB-UniRule"/>
</dbReference>
<dbReference type="GO" id="GO:0032259">
    <property type="term" value="P:methylation"/>
    <property type="evidence" value="ECO:0007669"/>
    <property type="project" value="UniProtKB-KW"/>
</dbReference>
<dbReference type="GO" id="GO:0006730">
    <property type="term" value="P:one-carbon metabolic process"/>
    <property type="evidence" value="ECO:0007669"/>
    <property type="project" value="UniProtKB-UniRule"/>
</dbReference>
<dbReference type="HAMAP" id="MF_01500">
    <property type="entry name" value="MtrG"/>
    <property type="match status" value="1"/>
</dbReference>
<dbReference type="InterPro" id="IPR005866">
    <property type="entry name" value="THM_MeTrfase_su_G"/>
</dbReference>
<dbReference type="NCBIfam" id="TIGR01149">
    <property type="entry name" value="mtrG"/>
    <property type="match status" value="1"/>
</dbReference>
<dbReference type="Pfam" id="PF04210">
    <property type="entry name" value="MtrG"/>
    <property type="match status" value="1"/>
</dbReference>
<dbReference type="PIRSF" id="PIRSF006500">
    <property type="entry name" value="MtrG"/>
    <property type="match status" value="1"/>
</dbReference>
<proteinExistence type="inferred from homology"/>
<sequence>MDGKAPAAFVEPGEFNEVMKRLDKIDEKIEFVNSEVAQKIGKKVGRDIGILYGGFIGLLLFLIYTVVSSMFM</sequence>
<feature type="chain" id="PRO_0000147554" description="Tetrahydromethanopterin S-methyltransferase subunit G">
    <location>
        <begin position="1"/>
        <end position="72"/>
    </location>
</feature>
<feature type="transmembrane region" description="Helical" evidence="1">
    <location>
        <begin position="48"/>
        <end position="68"/>
    </location>
</feature>
<accession>Q9Y8K6</accession>
<accession>Q46D23</accession>
<protein>
    <recommendedName>
        <fullName evidence="1">Tetrahydromethanopterin S-methyltransferase subunit G</fullName>
        <ecNumber evidence="1">7.2.1.4</ecNumber>
    </recommendedName>
    <alternativeName>
        <fullName evidence="1">N5-methyltetrahydromethanopterin--coenzyme M methyltransferase subunit G</fullName>
    </alternativeName>
</protein>
<keyword id="KW-1003">Cell membrane</keyword>
<keyword id="KW-0472">Membrane</keyword>
<keyword id="KW-0484">Methanogenesis</keyword>
<keyword id="KW-0489">Methyltransferase</keyword>
<keyword id="KW-0554">One-carbon metabolism</keyword>
<keyword id="KW-0808">Transferase</keyword>
<keyword id="KW-1278">Translocase</keyword>
<keyword id="KW-0812">Transmembrane</keyword>
<keyword id="KW-1133">Transmembrane helix</keyword>
<gene>
    <name evidence="1" type="primary">mtrG</name>
    <name type="ordered locus">Mbar_A1256</name>
</gene>